<proteinExistence type="evidence at protein level"/>
<reference key="1">
    <citation type="journal article" date="1986" name="J. Bacteriol.">
        <title>Nucleotide sequence analysis of the gene specifying the bifunctional 6'-aminoglycoside acetyltransferase 2'-aminoglycoside phosphotransferase enzyme in Streptococcus faecalis and identification and cloning of gene regions specifying the two activities.</title>
        <authorList>
            <person name="Ferretti J.J."/>
            <person name="Gilmore K.S."/>
            <person name="Courvalin P."/>
        </authorList>
    </citation>
    <scope>NUCLEOTIDE SEQUENCE [GENOMIC DNA]</scope>
    <source>
        <plasmid>pIP800</plasmid>
    </source>
</reference>
<reference key="2">
    <citation type="journal article" date="2003" name="Science">
        <title>Role of mobile DNA in the evolution of vancomycin-resistant Enterococcus faecalis.</title>
        <authorList>
            <person name="Paulsen I.T."/>
            <person name="Banerjei L."/>
            <person name="Myers G.S.A."/>
            <person name="Nelson K.E."/>
            <person name="Seshadri R."/>
            <person name="Read T.D."/>
            <person name="Fouts D.E."/>
            <person name="Eisen J.A."/>
            <person name="Gill S.R."/>
            <person name="Heidelberg J.F."/>
            <person name="Tettelin H."/>
            <person name="Dodson R.J."/>
            <person name="Umayam L.A."/>
            <person name="Brinkac L.M."/>
            <person name="Beanan M.J."/>
            <person name="Daugherty S.C."/>
            <person name="DeBoy R.T."/>
            <person name="Durkin S.A."/>
            <person name="Kolonay J.F."/>
            <person name="Madupu R."/>
            <person name="Nelson W.C."/>
            <person name="Vamathevan J.J."/>
            <person name="Tran B."/>
            <person name="Upton J."/>
            <person name="Hansen T."/>
            <person name="Shetty J."/>
            <person name="Khouri H.M."/>
            <person name="Utterback T.R."/>
            <person name="Radune D."/>
            <person name="Ketchum K.A."/>
            <person name="Dougherty B.A."/>
            <person name="Fraser C.M."/>
        </authorList>
    </citation>
    <scope>NUCLEOTIDE SEQUENCE [LARGE SCALE GENOMIC DNA]</scope>
    <source>
        <strain>ATCC 700802 / V583</strain>
        <plasmid>pTEF1</plasmid>
    </source>
</reference>
<reference key="3">
    <citation type="journal article" date="2012" name="J. Biol. Chem.">
        <title>Revisiting the nucleotide and aminoglycoside substrate specificity of the bifunctional aminoglycoside acetyltransferase(6')-Ie/aminoglycoside phosphotransferase(2'')-Ia enzyme.</title>
        <authorList>
            <person name="Frase H."/>
            <person name="Toth M."/>
            <person name="Vakulenko S.B."/>
        </authorList>
    </citation>
    <scope>FUNCTION</scope>
    <scope>CATALYTIC ACTIVITY</scope>
    <scope>BIOPHYSICOCHEMICAL PROPERTIES</scope>
</reference>
<sequence length="479" mass="56855">MNIVENEICIRTLIDDDFPLMLKWLTDERVLEFYGGRDKKYTLESLKKHYTEPWEDEVFRVIIEYNNVPIGYGQIYKMYDELYTDYHYPKTDEIVYGMDQFIGEPNYWSKGIGTRYIKLIFEFLKKERNANAVILDPHKNNPRAIRAYQKSGFRIIEDLPEHELHEGKKEDCYLMEYRYDDNATNVKAMKYLIEHYFDNFKVDSIEIIGSGYDSVAYLVNNEYIFKTKFSTNKKKGYAKEKAIYNFLNTNLETNVKIPNIEYSYISDELSILGYKEIKGTFLTPEIYSTMSEEEQNLLKRDIASFLRQMHGLDYTDISECTIDNKQNVLEEYILLRETIYNDLTDIEKDYIESFMERLNATTVFEGKKCLCHNDFSCNHLLLDGNNRLTGIIDFGDSGIIDEYCDFIYLLEDSEEEIGTNFGEDILRMYGNIDIEKAKEYQDIVEEYYPIETIVYGIKNIKQEFIENGRKEIYKRTYKD</sequence>
<name>AACA_ENTFA</name>
<accession>P0A0C2</accession>
<accession>P14507</accession>
<feature type="chain" id="PRO_0000204796" description="Bifunctional AAC/APH">
    <location>
        <begin position="1"/>
        <end position="479"/>
    </location>
</feature>
<feature type="domain" description="N-acetyltransferase" evidence="2">
    <location>
        <begin position="8"/>
        <end position="180"/>
    </location>
</feature>
<feature type="region of interest" description="Acetyl-CoA binding site" evidence="1">
    <location>
        <begin position="110"/>
        <end position="153"/>
    </location>
</feature>
<feature type="active site" description="Proton acceptor; for phosphotransferase activity" evidence="1">
    <location>
        <position position="374"/>
    </location>
</feature>
<feature type="binding site" evidence="1">
    <location>
        <position position="393"/>
    </location>
    <ligand>
        <name>a gentamycin</name>
        <dbReference type="ChEBI" id="CHEBI:90218"/>
    </ligand>
</feature>
<keyword id="KW-0012">Acyltransferase</keyword>
<keyword id="KW-0046">Antibiotic resistance</keyword>
<keyword id="KW-0067">ATP-binding</keyword>
<keyword id="KW-0963">Cytoplasm</keyword>
<keyword id="KW-0418">Kinase</keyword>
<keyword id="KW-0511">Multifunctional enzyme</keyword>
<keyword id="KW-0547">Nucleotide-binding</keyword>
<keyword id="KW-0614">Plasmid</keyword>
<keyword id="KW-1185">Reference proteome</keyword>
<keyword id="KW-0808">Transferase</keyword>
<keyword id="KW-0814">Transposable element</keyword>
<dbReference type="EC" id="2.3.1.-"/>
<dbReference type="EC" id="2.7.1.190" evidence="3"/>
<dbReference type="EMBL" id="M13771">
    <property type="protein sequence ID" value="AAA26865.1"/>
    <property type="molecule type" value="Genomic_DNA"/>
</dbReference>
<dbReference type="EMBL" id="AE016833">
    <property type="protein sequence ID" value="AAO83055.1"/>
    <property type="molecule type" value="Genomic_DNA"/>
</dbReference>
<dbReference type="PIR" id="A26048">
    <property type="entry name" value="A26048"/>
</dbReference>
<dbReference type="RefSeq" id="NP_816984.1">
    <property type="nucleotide sequence ID" value="NC_004669.1"/>
</dbReference>
<dbReference type="SMR" id="P0A0C2"/>
<dbReference type="EnsemblBacteria" id="AAO83055">
    <property type="protein sequence ID" value="AAO83055"/>
    <property type="gene ID" value="EF_A0061"/>
</dbReference>
<dbReference type="KEGG" id="ag:AAA26865"/>
<dbReference type="KEGG" id="efa:EFA0061"/>
<dbReference type="PATRIC" id="fig|226185.45.peg.2781"/>
<dbReference type="HOGENOM" id="CLU_632450_0_0_9"/>
<dbReference type="BioCyc" id="MetaCyc:MONOMER-19347"/>
<dbReference type="BRENDA" id="2.3.1.82">
    <property type="organism ID" value="2095"/>
</dbReference>
<dbReference type="BRENDA" id="2.7.1.190">
    <property type="organism ID" value="2095"/>
</dbReference>
<dbReference type="SABIO-RK" id="P0A0C2"/>
<dbReference type="PRO" id="PR:P0A0C2"/>
<dbReference type="Proteomes" id="UP000001415">
    <property type="component" value="Plasmid pTEF1"/>
</dbReference>
<dbReference type="GO" id="GO:0005737">
    <property type="term" value="C:cytoplasm"/>
    <property type="evidence" value="ECO:0007669"/>
    <property type="project" value="UniProtKB-SubCell"/>
</dbReference>
<dbReference type="GO" id="GO:0034071">
    <property type="term" value="F:aminoglycoside phosphotransferase activity"/>
    <property type="evidence" value="ECO:0007669"/>
    <property type="project" value="UniProtKB-EC"/>
</dbReference>
<dbReference type="GO" id="GO:0005524">
    <property type="term" value="F:ATP binding"/>
    <property type="evidence" value="ECO:0007669"/>
    <property type="project" value="UniProtKB-KW"/>
</dbReference>
<dbReference type="GO" id="GO:0016410">
    <property type="term" value="F:N-acyltransferase activity"/>
    <property type="evidence" value="ECO:0007669"/>
    <property type="project" value="TreeGrafter"/>
</dbReference>
<dbReference type="GO" id="GO:0046677">
    <property type="term" value="P:response to antibiotic"/>
    <property type="evidence" value="ECO:0007669"/>
    <property type="project" value="UniProtKB-KW"/>
</dbReference>
<dbReference type="CDD" id="cd05120">
    <property type="entry name" value="APH_ChoK_like"/>
    <property type="match status" value="1"/>
</dbReference>
<dbReference type="Gene3D" id="3.40.630.30">
    <property type="match status" value="1"/>
</dbReference>
<dbReference type="Gene3D" id="3.90.1200.10">
    <property type="match status" value="1"/>
</dbReference>
<dbReference type="Gene3D" id="3.30.200.20">
    <property type="entry name" value="Phosphorylase Kinase, domain 1"/>
    <property type="match status" value="1"/>
</dbReference>
<dbReference type="InterPro" id="IPR016181">
    <property type="entry name" value="Acyl_CoA_acyltransferase"/>
</dbReference>
<dbReference type="InterPro" id="IPR002575">
    <property type="entry name" value="Aminoglycoside_PTrfase"/>
</dbReference>
<dbReference type="InterPro" id="IPR000182">
    <property type="entry name" value="GNAT_dom"/>
</dbReference>
<dbReference type="InterPro" id="IPR011009">
    <property type="entry name" value="Kinase-like_dom_sf"/>
</dbReference>
<dbReference type="NCBIfam" id="NF000507">
    <property type="entry name" value="AAC_6p_Ie"/>
    <property type="match status" value="1"/>
</dbReference>
<dbReference type="NCBIfam" id="NF033693">
    <property type="entry name" value="AAC_6p_Ie_fam"/>
    <property type="match status" value="1"/>
</dbReference>
<dbReference type="NCBIfam" id="NF033692">
    <property type="entry name" value="APH_2pp_I_a_f_h"/>
    <property type="match status" value="1"/>
</dbReference>
<dbReference type="NCBIfam" id="NF000508">
    <property type="entry name" value="APH_2pp_Ia"/>
    <property type="match status" value="1"/>
</dbReference>
<dbReference type="PANTHER" id="PTHR31438">
    <property type="entry name" value="LYSINE N-ACYLTRANSFERASE C17G9.06C-RELATED"/>
    <property type="match status" value="1"/>
</dbReference>
<dbReference type="PANTHER" id="PTHR31438:SF1">
    <property type="entry name" value="LYSINE N-ACYLTRANSFERASE C17G9.06C-RELATED"/>
    <property type="match status" value="1"/>
</dbReference>
<dbReference type="Pfam" id="PF13523">
    <property type="entry name" value="Acetyltransf_8"/>
    <property type="match status" value="1"/>
</dbReference>
<dbReference type="Pfam" id="PF01636">
    <property type="entry name" value="APH"/>
    <property type="match status" value="1"/>
</dbReference>
<dbReference type="SUPFAM" id="SSF55729">
    <property type="entry name" value="Acyl-CoA N-acyltransferases (Nat)"/>
    <property type="match status" value="1"/>
</dbReference>
<dbReference type="SUPFAM" id="SSF56112">
    <property type="entry name" value="Protein kinase-like (PK-like)"/>
    <property type="match status" value="1"/>
</dbReference>
<dbReference type="PROSITE" id="PS51186">
    <property type="entry name" value="GNAT"/>
    <property type="match status" value="1"/>
</dbReference>
<geneLocation type="plasmid">
    <name>pIP800</name>
</geneLocation>
<geneLocation type="plasmid">
    <name>pTEF1</name>
</geneLocation>
<gene>
    <name type="primary">aacA-aphD</name>
    <name type="ordered locus">EF_A0061</name>
</gene>
<protein>
    <recommendedName>
        <fullName>Bifunctional AAC/APH</fullName>
    </recommendedName>
    <domain>
        <recommendedName>
            <fullName>6'-aminoglycoside N-acetyltransferase</fullName>
            <ecNumber>2.3.1.-</ecNumber>
        </recommendedName>
        <alternativeName>
            <fullName>AAC(6')</fullName>
        </alternativeName>
    </domain>
    <domain>
        <recommendedName>
            <fullName evidence="4">Aminoglycoside 2''-phosphotransferase</fullName>
            <ecNumber evidence="3">2.7.1.190</ecNumber>
        </recommendedName>
        <alternativeName>
            <fullName>2''-aminoglycoside phosphotransferase</fullName>
        </alternativeName>
        <alternativeName>
            <fullName>APH(2'')</fullName>
        </alternativeName>
    </domain>
</protein>
<organism>
    <name type="scientific">Enterococcus faecalis (strain ATCC 700802 / V583)</name>
    <dbReference type="NCBI Taxonomy" id="226185"/>
    <lineage>
        <taxon>Bacteria</taxon>
        <taxon>Bacillati</taxon>
        <taxon>Bacillota</taxon>
        <taxon>Bacilli</taxon>
        <taxon>Lactobacillales</taxon>
        <taxon>Enterococcaceae</taxon>
        <taxon>Enterococcus</taxon>
    </lineage>
</organism>
<evidence type="ECO:0000250" key="1"/>
<evidence type="ECO:0000255" key="2">
    <source>
        <dbReference type="PROSITE-ProRule" id="PRU00532"/>
    </source>
</evidence>
<evidence type="ECO:0000269" key="3">
    <source>
    </source>
</evidence>
<evidence type="ECO:0000305" key="4"/>
<comment type="function">
    <text evidence="3">Involved in resistance to gentamicin, tobramycin, and kanamycin. Tobramycin and kanamycin resistance is due to the ACC activity, specified by N-terminal region. The C-terminal region is a kinase that phosphorylates several 4,6-disubstituted aminoglycosides.</text>
</comment>
<comment type="catalytic activity">
    <reaction evidence="3">
        <text>a gentamycin + GTP = a gentamycin 2''-phosphate + GDP + H(+)</text>
        <dbReference type="Rhea" id="RHEA:48872"/>
        <dbReference type="ChEBI" id="CHEBI:15378"/>
        <dbReference type="ChEBI" id="CHEBI:37565"/>
        <dbReference type="ChEBI" id="CHEBI:58189"/>
        <dbReference type="ChEBI" id="CHEBI:90218"/>
        <dbReference type="ChEBI" id="CHEBI:90219"/>
        <dbReference type="EC" id="2.7.1.190"/>
    </reaction>
</comment>
<comment type="biophysicochemical properties">
    <kinetics>
        <KM evidence="3">3 uM for GTP</KM>
        <KM evidence="3">0.3 uM for dibekacin</KM>
        <KM evidence="3">0.8 uM for arbekacin</KM>
        <KM evidence="3">33 uM for amikacin</KM>
        <KM evidence="3">0.6 uM for gentamicin C</KM>
        <KM evidence="3">0.8 uM for sisomicin</KM>
        <KM evidence="3">0.41 uM for netilmicin</KM>
    </kinetics>
</comment>
<comment type="subcellular location">
    <subcellularLocation>
        <location>Cytoplasm</location>
    </subcellularLocation>
</comment>
<comment type="similarity">
    <text evidence="4">In the C-terminal section; belongs to the aminoglycoside phosphotransferase family.</text>
</comment>